<comment type="function">
    <text evidence="9">Component of the ribosome, a large ribonucleoprotein complex responsible for the synthesis of proteins in the cell. The small ribosomal subunit (SSU) binds messenger RNAs (mRNAs) and translates the encoded message by selecting cognate aminoacyl-transfer RNA (tRNA) molecules. The large subunit (LSU) contains the ribosomal catalytic site termed the peptidyl transferase center (PTC), which catalyzes the formation of peptide bonds, thereby polymerizing the amino acids delivered by tRNAs into a polypeptide chain. The nascent polypeptides leave the ribosome through a tunnel in the LSU and interact with protein factors that function in enzymatic processing, targeting, and the membrane insertion of nascent chains at the exit of the ribosomal tunnel.</text>
</comment>
<comment type="subunit">
    <text evidence="5 9 10 11">Component of the small ribosomal subunit (SSU) (Probable) (Ref.13). Mature yeast ribosomes consist of a small (40S) and a large (60S) subunit. The 40S small subunit contains 1 molecule of ribosomal RNA (18S rRNA) and 33 different proteins (encoded by 57 genes). The large 60S subunit contains 3 rRNA molecules (25S, 5.8S and 5S rRNA) and 46 different proteins (encoded by 81 genes) (PubMed:22096102, PubMed:9559554).</text>
</comment>
<comment type="subcellular location">
    <subcellularLocation>
        <location evidence="3 5">Cytoplasm</location>
    </subcellularLocation>
</comment>
<comment type="mass spectrometry" mass="3335.103" method="Electrospray" evidence="2">
    <text>Monoisotopic mass.</text>
</comment>
<comment type="miscellaneous">
    <text evidence="4">Present with 4910 molecules/cell in log phase SD medium.</text>
</comment>
<comment type="miscellaneous">
    <text evidence="8">There are 2 genes for this protein in yeast.</text>
</comment>
<comment type="miscellaneous">
    <text evidence="11">Initially thought to be part of the large ribosomal subunit. Crystal structures show eS32/eL41 to be a small ribosomal subunit forming a bridge at the interface of the 2 subunits.</text>
</comment>
<comment type="similarity">
    <text evidence="8">Belongs to the eukaryotic ribosomal protein eS32 family.</text>
</comment>
<feature type="chain" id="PRO_0000410448" description="Small ribosomal subunit protein eS32B">
    <location>
        <begin position="1"/>
        <end position="25"/>
    </location>
</feature>
<feature type="region of interest" description="Disordered" evidence="1">
    <location>
        <begin position="1"/>
        <end position="25"/>
    </location>
</feature>
<evidence type="ECO:0000256" key="1">
    <source>
        <dbReference type="SAM" id="MobiDB-lite"/>
    </source>
</evidence>
<evidence type="ECO:0000269" key="2">
    <source>
    </source>
</evidence>
<evidence type="ECO:0000269" key="3">
    <source>
    </source>
</evidence>
<evidence type="ECO:0000269" key="4">
    <source>
    </source>
</evidence>
<evidence type="ECO:0000269" key="5">
    <source>
    </source>
</evidence>
<evidence type="ECO:0000303" key="6">
    <source>
    </source>
</evidence>
<evidence type="ECO:0000303" key="7">
    <source>
    </source>
</evidence>
<evidence type="ECO:0000305" key="8"/>
<evidence type="ECO:0000305" key="9">
    <source>
    </source>
</evidence>
<evidence type="ECO:0000305" key="10">
    <source>
    </source>
</evidence>
<evidence type="ECO:0000305" key="11">
    <source ref="13"/>
</evidence>
<keyword id="KW-0002">3D-structure</keyword>
<keyword id="KW-0963">Cytoplasm</keyword>
<keyword id="KW-0903">Direct protein sequencing</keyword>
<keyword id="KW-1185">Reference proteome</keyword>
<keyword id="KW-0687">Ribonucleoprotein</keyword>
<keyword id="KW-0689">Ribosomal protein</keyword>
<accession>P0CX87</accession>
<accession>D6VRG8</accession>
<accession>P05746</accession>
<name>RS32B_YEAST</name>
<protein>
    <recommendedName>
        <fullName evidence="11">Small ribosomal subunit protein eS32B</fullName>
    </recommendedName>
    <alternativeName>
        <fullName evidence="7">60S ribosomal protein L41-B</fullName>
    </alternativeName>
    <alternativeName>
        <fullName>L47</fullName>
    </alternativeName>
    <alternativeName>
        <fullName evidence="6">Large ribosomal subunit protein eL41B</fullName>
    </alternativeName>
    <alternativeName>
        <fullName>YL41</fullName>
    </alternativeName>
</protein>
<reference key="1">
    <citation type="journal article" date="1984" name="Mol. Gen. Genet.">
        <title>Yeast ribosomal proteins. VIII. Isolation of two proteins and sequence characterization of twenty-four proteins from cytoplasmic ribosomes.</title>
        <authorList>
            <person name="Otaka E."/>
            <person name="Higo K."/>
            <person name="Itoh T."/>
        </authorList>
    </citation>
    <scope>PROTEIN SEQUENCE</scope>
</reference>
<reference key="2">
    <citation type="journal article" date="1990" name="Curr. Genet.">
        <title>Yeast ribosomal proteins: XI. Molecular analysis of two genes encoding YL41, an extremely small and basic ribosomal protein, from Saccharomyces cerevisiae.</title>
        <authorList>
            <person name="Suzuki K."/>
            <person name="Hashimoto T."/>
            <person name="Otaka E."/>
        </authorList>
    </citation>
    <scope>NUCLEOTIDE SEQUENCE [GENOMIC DNA]</scope>
</reference>
<reference key="3">
    <citation type="journal article" date="2001" name="J. Biol. Chem.">
        <title>Expression of a micro-protein.</title>
        <authorList>
            <person name="Yu X."/>
            <person name="Warner J.R."/>
        </authorList>
    </citation>
    <scope>NUCLEOTIDE SEQUENCE [MRNA]</scope>
</reference>
<reference key="4">
    <citation type="journal article" date="1996" name="Yeast">
        <title>Analysis of a 26,756 bp segment from the left arm of yeast chromosome IV.</title>
        <authorList>
            <person name="Woelfl S."/>
            <person name="Haneman V."/>
            <person name="Saluz H.P."/>
        </authorList>
    </citation>
    <scope>NUCLEOTIDE SEQUENCE [GENOMIC DNA]</scope>
    <source>
        <strain>ATCC 96604 / S288c / FY1679</strain>
    </source>
</reference>
<reference key="5">
    <citation type="journal article" date="1997" name="Nature">
        <title>The nucleotide sequence of Saccharomyces cerevisiae chromosome IV.</title>
        <authorList>
            <person name="Jacq C."/>
            <person name="Alt-Moerbe J."/>
            <person name="Andre B."/>
            <person name="Arnold W."/>
            <person name="Bahr A."/>
            <person name="Ballesta J.P.G."/>
            <person name="Bargues M."/>
            <person name="Baron L."/>
            <person name="Becker A."/>
            <person name="Biteau N."/>
            <person name="Bloecker H."/>
            <person name="Blugeon C."/>
            <person name="Boskovic J."/>
            <person name="Brandt P."/>
            <person name="Brueckner M."/>
            <person name="Buitrago M.J."/>
            <person name="Coster F."/>
            <person name="Delaveau T."/>
            <person name="del Rey F."/>
            <person name="Dujon B."/>
            <person name="Eide L.G."/>
            <person name="Garcia-Cantalejo J.M."/>
            <person name="Goffeau A."/>
            <person name="Gomez-Peris A."/>
            <person name="Granotier C."/>
            <person name="Hanemann V."/>
            <person name="Hankeln T."/>
            <person name="Hoheisel J.D."/>
            <person name="Jaeger W."/>
            <person name="Jimenez A."/>
            <person name="Jonniaux J.-L."/>
            <person name="Kraemer C."/>
            <person name="Kuester H."/>
            <person name="Laamanen P."/>
            <person name="Legros Y."/>
            <person name="Louis E.J."/>
            <person name="Moeller-Rieker S."/>
            <person name="Monnet A."/>
            <person name="Moro M."/>
            <person name="Mueller-Auer S."/>
            <person name="Nussbaumer B."/>
            <person name="Paricio N."/>
            <person name="Paulin L."/>
            <person name="Perea J."/>
            <person name="Perez-Alonso M."/>
            <person name="Perez-Ortin J.E."/>
            <person name="Pohl T.M."/>
            <person name="Prydz H."/>
            <person name="Purnelle B."/>
            <person name="Rasmussen S.W."/>
            <person name="Remacha M.A."/>
            <person name="Revuelta J.L."/>
            <person name="Rieger M."/>
            <person name="Salom D."/>
            <person name="Saluz H.P."/>
            <person name="Saiz J.E."/>
            <person name="Saren A.-M."/>
            <person name="Schaefer M."/>
            <person name="Scharfe M."/>
            <person name="Schmidt E.R."/>
            <person name="Schneider C."/>
            <person name="Scholler P."/>
            <person name="Schwarz S."/>
            <person name="Soler-Mira A."/>
            <person name="Urrestarazu L.A."/>
            <person name="Verhasselt P."/>
            <person name="Vissers S."/>
            <person name="Voet M."/>
            <person name="Volckaert G."/>
            <person name="Wagner G."/>
            <person name="Wambutt R."/>
            <person name="Wedler E."/>
            <person name="Wedler H."/>
            <person name="Woelfl S."/>
            <person name="Harris D.E."/>
            <person name="Bowman S."/>
            <person name="Brown D."/>
            <person name="Churcher C.M."/>
            <person name="Connor R."/>
            <person name="Dedman K."/>
            <person name="Gentles S."/>
            <person name="Hamlin N."/>
            <person name="Hunt S."/>
            <person name="Jones L."/>
            <person name="McDonald S."/>
            <person name="Murphy L.D."/>
            <person name="Niblett D."/>
            <person name="Odell C."/>
            <person name="Oliver K."/>
            <person name="Rajandream M.A."/>
            <person name="Richards C."/>
            <person name="Shore L."/>
            <person name="Walsh S.V."/>
            <person name="Barrell B.G."/>
            <person name="Dietrich F.S."/>
            <person name="Mulligan J.T."/>
            <person name="Allen E."/>
            <person name="Araujo R."/>
            <person name="Aviles E."/>
            <person name="Berno A."/>
            <person name="Carpenter J."/>
            <person name="Chen E."/>
            <person name="Cherry J.M."/>
            <person name="Chung E."/>
            <person name="Duncan M."/>
            <person name="Hunicke-Smith S."/>
            <person name="Hyman R.W."/>
            <person name="Komp C."/>
            <person name="Lashkari D."/>
            <person name="Lew H."/>
            <person name="Lin D."/>
            <person name="Mosedale D."/>
            <person name="Nakahara K."/>
            <person name="Namath A."/>
            <person name="Oefner P."/>
            <person name="Oh C."/>
            <person name="Petel F.X."/>
            <person name="Roberts D."/>
            <person name="Schramm S."/>
            <person name="Schroeder M."/>
            <person name="Shogren T."/>
            <person name="Shroff N."/>
            <person name="Winant A."/>
            <person name="Yelton M.A."/>
            <person name="Botstein D."/>
            <person name="Davis R.W."/>
            <person name="Johnston M."/>
            <person name="Andrews S."/>
            <person name="Brinkman R."/>
            <person name="Cooper J."/>
            <person name="Ding H."/>
            <person name="Du Z."/>
            <person name="Favello A."/>
            <person name="Fulton L."/>
            <person name="Gattung S."/>
            <person name="Greco T."/>
            <person name="Hallsworth K."/>
            <person name="Hawkins J."/>
            <person name="Hillier L.W."/>
            <person name="Jier M."/>
            <person name="Johnson D."/>
            <person name="Johnston L."/>
            <person name="Kirsten J."/>
            <person name="Kucaba T."/>
            <person name="Langston Y."/>
            <person name="Latreille P."/>
            <person name="Le T."/>
            <person name="Mardis E."/>
            <person name="Menezes S."/>
            <person name="Miller N."/>
            <person name="Nhan M."/>
            <person name="Pauley A."/>
            <person name="Peluso D."/>
            <person name="Rifkin L."/>
            <person name="Riles L."/>
            <person name="Taich A."/>
            <person name="Trevaskis E."/>
            <person name="Vignati D."/>
            <person name="Wilcox L."/>
            <person name="Wohldman P."/>
            <person name="Vaudin M."/>
            <person name="Wilson R."/>
            <person name="Waterston R."/>
            <person name="Albermann K."/>
            <person name="Hani J."/>
            <person name="Heumann K."/>
            <person name="Kleine K."/>
            <person name="Mewes H.-W."/>
            <person name="Zollner A."/>
            <person name="Zaccaria P."/>
        </authorList>
    </citation>
    <scope>NUCLEOTIDE SEQUENCE [LARGE SCALE GENOMIC DNA]</scope>
    <source>
        <strain>ATCC 204508 / S288c</strain>
    </source>
</reference>
<reference key="6">
    <citation type="journal article" date="2014" name="G3 (Bethesda)">
        <title>The reference genome sequence of Saccharomyces cerevisiae: Then and now.</title>
        <authorList>
            <person name="Engel S.R."/>
            <person name="Dietrich F.S."/>
            <person name="Fisk D.G."/>
            <person name="Binkley G."/>
            <person name="Balakrishnan R."/>
            <person name="Costanzo M.C."/>
            <person name="Dwight S.S."/>
            <person name="Hitz B.C."/>
            <person name="Karra K."/>
            <person name="Nash R.S."/>
            <person name="Weng S."/>
            <person name="Wong E.D."/>
            <person name="Lloyd P."/>
            <person name="Skrzypek M.S."/>
            <person name="Miyasato S.R."/>
            <person name="Simison M."/>
            <person name="Cherry J.M."/>
        </authorList>
    </citation>
    <scope>GENOME REANNOTATION</scope>
    <source>
        <strain>ATCC 204508 / S288c</strain>
    </source>
</reference>
<reference key="7">
    <citation type="journal article" date="1998" name="Yeast">
        <title>The list of cytoplasmic ribosomal proteins of Saccharomyces cerevisiae.</title>
        <authorList>
            <person name="Planta R.J."/>
            <person name="Mager W.H."/>
        </authorList>
    </citation>
    <scope>NOMENCLATURE</scope>
    <scope>SUBUNIT</scope>
</reference>
<reference key="8">
    <citation type="journal article" date="2002" name="Proc. Natl. Acad. Sci. U.S.A.">
        <title>Direct mass spectrometric analysis of intact proteins of the yeast large ribosomal subunit using capillary LC/FTICR.</title>
        <authorList>
            <person name="Lee S.-W."/>
            <person name="Berger S.J."/>
            <person name="Martinovic S."/>
            <person name="Pasa-Tolic L."/>
            <person name="Anderson G.A."/>
            <person name="Shen Y."/>
            <person name="Zhao R."/>
            <person name="Smith R.D."/>
        </authorList>
    </citation>
    <scope>MASS SPECTROMETRY</scope>
</reference>
<reference key="9">
    <citation type="journal article" date="2003" name="Nature">
        <title>Global analysis of protein localization in budding yeast.</title>
        <authorList>
            <person name="Huh W.-K."/>
            <person name="Falvo J.V."/>
            <person name="Gerke L.C."/>
            <person name="Carroll A.S."/>
            <person name="Howson R.W."/>
            <person name="Weissman J.S."/>
            <person name="O'Shea E.K."/>
        </authorList>
    </citation>
    <scope>SUBCELLULAR LOCATION [LARGE SCALE ANALYSIS]</scope>
</reference>
<reference key="10">
    <citation type="journal article" date="2003" name="Nature">
        <title>Global analysis of protein expression in yeast.</title>
        <authorList>
            <person name="Ghaemmaghami S."/>
            <person name="Huh W.-K."/>
            <person name="Bower K."/>
            <person name="Howson R.W."/>
            <person name="Belle A."/>
            <person name="Dephoure N."/>
            <person name="O'Shea E.K."/>
            <person name="Weissman J.S."/>
        </authorList>
    </citation>
    <scope>LEVEL OF PROTEIN EXPRESSION [LARGE SCALE ANALYSIS]</scope>
</reference>
<reference key="11">
    <citation type="journal article" date="2011" name="Science">
        <title>The structure of the eukaryotic ribosome at 3.0 A resolution.</title>
        <authorList>
            <person name="Ben-Shem A."/>
            <person name="Garreau de Loubresse N."/>
            <person name="Melnikov S."/>
            <person name="Jenner L."/>
            <person name="Yusupova G."/>
            <person name="Yusupov M."/>
        </authorList>
    </citation>
    <scope>SUBUNIT</scope>
    <scope>SUBCELLULAR LOCATION</scope>
</reference>
<reference key="12">
    <citation type="journal article" date="2014" name="Curr. Opin. Struct. Biol.">
        <title>A new system for naming ribosomal proteins.</title>
        <authorList>
            <person name="Ban N."/>
            <person name="Beckmann R."/>
            <person name="Cate J.H.D."/>
            <person name="Dinman J.D."/>
            <person name="Dragon F."/>
            <person name="Ellis S.R."/>
            <person name="Lafontaine D.L.J."/>
            <person name="Lindahl L."/>
            <person name="Liljas A."/>
            <person name="Lipton J.M."/>
            <person name="McAlear M.A."/>
            <person name="Moore P.B."/>
            <person name="Noller H.F."/>
            <person name="Ortega J."/>
            <person name="Panse V.G."/>
            <person name="Ramakrishnan V."/>
            <person name="Spahn C.M.T."/>
            <person name="Steitz T.A."/>
            <person name="Tchorzewski M."/>
            <person name="Tollervey D."/>
            <person name="Warren A.J."/>
            <person name="Williamson J.R."/>
            <person name="Wilson D."/>
            <person name="Yonath A."/>
            <person name="Yusupov M."/>
        </authorList>
    </citation>
    <scope>NOMENCLATURE</scope>
</reference>
<reference key="13">
    <citation type="unpublished observations" date="2023-10">
        <authorList>
            <person name="Leibundgut M.A."/>
            <person name="Ban N."/>
        </authorList>
    </citation>
    <scope>REVISION OF SUBUNIT</scope>
    <scope>NOMENCLATURE</scope>
</reference>
<sequence length="25" mass="3337">MRAKWRKKRTRRLKRKRRKVRARSK</sequence>
<gene>
    <name evidence="7" type="primary">RPL41B</name>
    <name type="synonym">RPL47B</name>
    <name type="synonym">YL41B</name>
    <name type="ordered locus">YDL133C-A</name>
    <name type="ORF">YDL133BC</name>
</gene>
<dbReference type="EMBL" id="X16066">
    <property type="protein sequence ID" value="CAA34202.1"/>
    <property type="molecule type" value="Genomic_DNA"/>
</dbReference>
<dbReference type="EMBL" id="X96876">
    <property type="protein sequence ID" value="CAA65626.1"/>
    <property type="molecule type" value="Genomic_DNA"/>
</dbReference>
<dbReference type="EMBL" id="Z74181">
    <property type="protein sequence ID" value="CAA98705.1"/>
    <property type="molecule type" value="Genomic_DNA"/>
</dbReference>
<dbReference type="EMBL" id="Z74182">
    <property type="protein sequence ID" value="CAA98706.1"/>
    <property type="molecule type" value="Genomic_DNA"/>
</dbReference>
<dbReference type="EMBL" id="BK006938">
    <property type="protein sequence ID" value="DAA11725.1"/>
    <property type="molecule type" value="Genomic_DNA"/>
</dbReference>
<dbReference type="PIR" id="S22246">
    <property type="entry name" value="R6BY4B"/>
</dbReference>
<dbReference type="RefSeq" id="NP_010148.1">
    <property type="nucleotide sequence ID" value="NM_001180194.1"/>
</dbReference>
<dbReference type="PDB" id="4V8Y">
    <property type="method" value="EM"/>
    <property type="resolution" value="4.30 A"/>
    <property type="chains" value="Bn=1-25"/>
</dbReference>
<dbReference type="PDB" id="4V8Z">
    <property type="method" value="EM"/>
    <property type="resolution" value="6.60 A"/>
    <property type="chains" value="Bn=1-25"/>
</dbReference>
<dbReference type="PDB" id="5M1J">
    <property type="method" value="EM"/>
    <property type="resolution" value="3.30 A"/>
    <property type="chains" value="n5=1-25"/>
</dbReference>
<dbReference type="PDB" id="5MEI">
    <property type="method" value="X-ray"/>
    <property type="resolution" value="3.50 A"/>
    <property type="chains" value="AO/DP=1-25"/>
</dbReference>
<dbReference type="PDB" id="5NDV">
    <property type="method" value="X-ray"/>
    <property type="resolution" value="3.30 A"/>
    <property type="chains" value="Q1/q1=1-25"/>
</dbReference>
<dbReference type="PDB" id="5ON6">
    <property type="method" value="X-ray"/>
    <property type="resolution" value="3.10 A"/>
    <property type="chains" value="AO/DP=1-25"/>
</dbReference>
<dbReference type="PDB" id="6GQ1">
    <property type="method" value="EM"/>
    <property type="resolution" value="4.40 A"/>
    <property type="chains" value="n=1-25"/>
</dbReference>
<dbReference type="PDB" id="6GQB">
    <property type="method" value="EM"/>
    <property type="resolution" value="3.90 A"/>
    <property type="chains" value="n=1-25"/>
</dbReference>
<dbReference type="PDB" id="6GQV">
    <property type="method" value="EM"/>
    <property type="resolution" value="4.00 A"/>
    <property type="chains" value="n=1-25"/>
</dbReference>
<dbReference type="PDB" id="6HHQ">
    <property type="method" value="X-ray"/>
    <property type="resolution" value="3.10 A"/>
    <property type="chains" value="AO/DP=1-25"/>
</dbReference>
<dbReference type="PDB" id="6I7O">
    <property type="method" value="EM"/>
    <property type="resolution" value="5.30 A"/>
    <property type="chains" value="AS/XS=1-25"/>
</dbReference>
<dbReference type="PDB" id="6Q8Y">
    <property type="method" value="EM"/>
    <property type="resolution" value="3.10 A"/>
    <property type="chains" value="AS=1-25"/>
</dbReference>
<dbReference type="PDB" id="6S47">
    <property type="method" value="EM"/>
    <property type="resolution" value="3.28 A"/>
    <property type="chains" value="Ap=1-25"/>
</dbReference>
<dbReference type="PDB" id="6T7I">
    <property type="method" value="EM"/>
    <property type="resolution" value="3.20 A"/>
    <property type="chains" value="Ln=1-25"/>
</dbReference>
<dbReference type="PDB" id="6TB3">
    <property type="method" value="EM"/>
    <property type="resolution" value="2.80 A"/>
    <property type="chains" value="AS=1-25"/>
</dbReference>
<dbReference type="PDB" id="6Z6J">
    <property type="method" value="EM"/>
    <property type="resolution" value="3.40 A"/>
    <property type="chains" value="Ln=1-25"/>
</dbReference>
<dbReference type="PDB" id="7B7D">
    <property type="method" value="EM"/>
    <property type="resolution" value="3.30 A"/>
    <property type="chains" value="Lj=1-25"/>
</dbReference>
<dbReference type="PDB" id="7NRD">
    <property type="method" value="EM"/>
    <property type="resolution" value="4.36 A"/>
    <property type="chains" value="Lp=1-25"/>
</dbReference>
<dbReference type="PDB" id="8BN3">
    <property type="method" value="EM"/>
    <property type="resolution" value="2.40 A"/>
    <property type="chains" value="Q1=1-25"/>
</dbReference>
<dbReference type="PDBsum" id="4V8Y"/>
<dbReference type="PDBsum" id="4V8Z"/>
<dbReference type="PDBsum" id="5M1J"/>
<dbReference type="PDBsum" id="5MEI"/>
<dbReference type="PDBsum" id="5NDV"/>
<dbReference type="PDBsum" id="5ON6"/>
<dbReference type="PDBsum" id="6GQ1"/>
<dbReference type="PDBsum" id="6GQB"/>
<dbReference type="PDBsum" id="6GQV"/>
<dbReference type="PDBsum" id="6HHQ"/>
<dbReference type="PDBsum" id="6I7O"/>
<dbReference type="PDBsum" id="6Q8Y"/>
<dbReference type="PDBsum" id="6S47"/>
<dbReference type="PDBsum" id="6T7I"/>
<dbReference type="PDBsum" id="6TB3"/>
<dbReference type="PDBsum" id="6Z6J"/>
<dbReference type="PDBsum" id="7B7D"/>
<dbReference type="PDBsum" id="7NRD"/>
<dbReference type="PDBsum" id="8BN3"/>
<dbReference type="EMDB" id="EMD-0047"/>
<dbReference type="EMDB" id="EMD-0048"/>
<dbReference type="EMDB" id="EMD-0049"/>
<dbReference type="EMDB" id="EMD-10098"/>
<dbReference type="EMDB" id="EMD-10396"/>
<dbReference type="EMDB" id="EMD-10431"/>
<dbReference type="EMDB" id="EMD-11096"/>
<dbReference type="EMDB" id="EMD-12081"/>
<dbReference type="EMDB" id="EMD-12535"/>
<dbReference type="EMDB" id="EMD-16127"/>
<dbReference type="EMDB" id="EMD-4140"/>
<dbReference type="EMDB" id="EMD-4427"/>
<dbReference type="EMDB" id="EMD-4474"/>
<dbReference type="SMR" id="P0CX87"/>
<dbReference type="BioGRID" id="31860">
    <property type="interactions" value="134"/>
</dbReference>
<dbReference type="BioGRID" id="31928">
    <property type="interactions" value="95"/>
</dbReference>
<dbReference type="FunCoup" id="P0CX87">
    <property type="interactions" value="220"/>
</dbReference>
<dbReference type="EnsemblFungi" id="YDL133C-A_mRNA">
    <property type="protein sequence ID" value="YDL133C-A"/>
    <property type="gene ID" value="YDL133C-A"/>
</dbReference>
<dbReference type="EnsemblFungi" id="YDL184C_mRNA">
    <property type="protein sequence ID" value="YDL184C"/>
    <property type="gene ID" value="YDL184C"/>
</dbReference>
<dbReference type="GeneID" id="851422"/>
<dbReference type="KEGG" id="sce:YDL133C-A"/>
<dbReference type="KEGG" id="sce:YDL184C"/>
<dbReference type="AGR" id="SGD:S000002293"/>
<dbReference type="SGD" id="S000002293">
    <property type="gene designation" value="RPL41B"/>
</dbReference>
<dbReference type="VEuPathDB" id="FungiDB:YDL133C-A"/>
<dbReference type="VEuPathDB" id="FungiDB:YDL184C"/>
<dbReference type="GeneTree" id="ENSGT01030000240120"/>
<dbReference type="HOGENOM" id="CLU_220499_0_0_1"/>
<dbReference type="InParanoid" id="P0CX87"/>
<dbReference type="BioCyc" id="YEAST:G3O-29533-MONOMER"/>
<dbReference type="PRO" id="PR:P0CX87"/>
<dbReference type="Proteomes" id="UP000002311">
    <property type="component" value="Chromosome IV"/>
</dbReference>
<dbReference type="ExpressionAtlas" id="P0CX87">
    <property type="expression patterns" value="baseline and differential"/>
</dbReference>
<dbReference type="GO" id="GO:0005829">
    <property type="term" value="C:cytosol"/>
    <property type="evidence" value="ECO:0000304"/>
    <property type="project" value="Reactome"/>
</dbReference>
<dbReference type="GO" id="GO:0022625">
    <property type="term" value="C:cytosolic large ribosomal subunit"/>
    <property type="evidence" value="ECO:0000314"/>
    <property type="project" value="SGD"/>
</dbReference>
<dbReference type="GO" id="GO:0003735">
    <property type="term" value="F:structural constituent of ribosome"/>
    <property type="evidence" value="ECO:0000314"/>
    <property type="project" value="SGD"/>
</dbReference>
<dbReference type="GO" id="GO:0002181">
    <property type="term" value="P:cytoplasmic translation"/>
    <property type="evidence" value="ECO:0000314"/>
    <property type="project" value="SGD"/>
</dbReference>
<dbReference type="InterPro" id="IPR007836">
    <property type="entry name" value="Ribosomal_eS32"/>
</dbReference>
<dbReference type="Pfam" id="PF05162">
    <property type="entry name" value="Ribosomal_L41"/>
    <property type="match status" value="1"/>
</dbReference>
<proteinExistence type="evidence at protein level"/>
<organism>
    <name type="scientific">Saccharomyces cerevisiae (strain ATCC 204508 / S288c)</name>
    <name type="common">Baker's yeast</name>
    <dbReference type="NCBI Taxonomy" id="559292"/>
    <lineage>
        <taxon>Eukaryota</taxon>
        <taxon>Fungi</taxon>
        <taxon>Dikarya</taxon>
        <taxon>Ascomycota</taxon>
        <taxon>Saccharomycotina</taxon>
        <taxon>Saccharomycetes</taxon>
        <taxon>Saccharomycetales</taxon>
        <taxon>Saccharomycetaceae</taxon>
        <taxon>Saccharomyces</taxon>
    </lineage>
</organism>